<name>ETM_NPVOP</name>
<protein>
    <recommendedName>
        <fullName>ECORI-T site protein ETM homolog</fullName>
    </recommendedName>
</protein>
<gene>
    <name type="primary">ETM</name>
    <name type="ORF">ORF52</name>
</gene>
<keyword id="KW-0244">Early protein</keyword>
<keyword id="KW-1185">Reference proteome</keyword>
<sequence>MDALQNVRVHIDKHHACRRALFETPNRASFTFDRATADASIASIEISGLRRPYECFGKMVVGDALVHVRERSAGGKIVVPVNGPADFFTAVLKNGLEFIKLDVYVAPRI</sequence>
<organismHost>
    <name type="scientific">Orgyia pseudotsugata</name>
    <name type="common">Douglas-fir tussock moth</name>
    <dbReference type="NCBI Taxonomy" id="33414"/>
</organismHost>
<reference key="1">
    <citation type="journal article" date="1997" name="Virology">
        <title>The sequence of the Orgyia pseudotsugata multinucleocapsid nuclear polyhedrosis virus genome.</title>
        <authorList>
            <person name="Ahrens C.H."/>
            <person name="Russell R.R."/>
            <person name="Funk C.J."/>
            <person name="Evans J."/>
            <person name="Harwood S."/>
            <person name="Rohrmann G.F."/>
        </authorList>
    </citation>
    <scope>NUCLEOTIDE SEQUENCE [LARGE SCALE GENOMIC DNA]</scope>
</reference>
<feature type="chain" id="PRO_0000132868" description="ECORI-T site protein ETM homolog">
    <location>
        <begin position="1"/>
        <end position="109"/>
    </location>
</feature>
<organism>
    <name type="scientific">Orgyia pseudotsugata multicapsid polyhedrosis virus</name>
    <name type="common">OpMNPV</name>
    <dbReference type="NCBI Taxonomy" id="262177"/>
    <lineage>
        <taxon>Viruses</taxon>
        <taxon>Viruses incertae sedis</taxon>
        <taxon>Naldaviricetes</taxon>
        <taxon>Lefavirales</taxon>
        <taxon>Baculoviridae</taxon>
        <taxon>Alphabaculovirus</taxon>
        <taxon>Alphabaculovirus orpseudotsugatae</taxon>
    </lineage>
</organism>
<proteinExistence type="predicted"/>
<dbReference type="EMBL" id="U75930">
    <property type="protein sequence ID" value="AAC59051.1"/>
    <property type="molecule type" value="Genomic_DNA"/>
</dbReference>
<dbReference type="RefSeq" id="NP_046208.1">
    <property type="nucleotide sequence ID" value="NC_001875.2"/>
</dbReference>
<dbReference type="KEGG" id="vg:912093"/>
<dbReference type="OrthoDB" id="18821at10239"/>
<dbReference type="Proteomes" id="UP000009248">
    <property type="component" value="Genome"/>
</dbReference>
<dbReference type="InterPro" id="IPR035147">
    <property type="entry name" value="ETM"/>
</dbReference>
<dbReference type="Pfam" id="PF17577">
    <property type="entry name" value="ETM"/>
    <property type="match status" value="1"/>
</dbReference>
<accession>O10307</accession>